<name>TLP3_ORYSJ</name>
<keyword id="KW-1185">Reference proteome</keyword>
<feature type="chain" id="PRO_0000351122" description="Tubby-like F-box protein 3">
    <location>
        <begin position="1"/>
        <end position="448"/>
    </location>
</feature>
<feature type="domain" description="F-box">
    <location>
        <begin position="56"/>
        <end position="102"/>
    </location>
</feature>
<feature type="region of interest" description="Disordered" evidence="1">
    <location>
        <begin position="387"/>
        <end position="406"/>
    </location>
</feature>
<feature type="compositionally biased region" description="Pro residues" evidence="1">
    <location>
        <begin position="387"/>
        <end position="403"/>
    </location>
</feature>
<feature type="sequence conflict" description="In Ref. 6; AK102221." evidence="3" ref="6">
    <original>P</original>
    <variation>T</variation>
    <location>
        <position position="356"/>
    </location>
</feature>
<organism>
    <name type="scientific">Oryza sativa subsp. japonica</name>
    <name type="common">Rice</name>
    <dbReference type="NCBI Taxonomy" id="39947"/>
    <lineage>
        <taxon>Eukaryota</taxon>
        <taxon>Viridiplantae</taxon>
        <taxon>Streptophyta</taxon>
        <taxon>Embryophyta</taxon>
        <taxon>Tracheophyta</taxon>
        <taxon>Spermatophyta</taxon>
        <taxon>Magnoliopsida</taxon>
        <taxon>Liliopsida</taxon>
        <taxon>Poales</taxon>
        <taxon>Poaceae</taxon>
        <taxon>BOP clade</taxon>
        <taxon>Oryzoideae</taxon>
        <taxon>Oryzeae</taxon>
        <taxon>Oryzinae</taxon>
        <taxon>Oryza</taxon>
        <taxon>Oryza sativa</taxon>
    </lineage>
</organism>
<accession>Q8LJA9</accession>
<accession>A0A0P0VAT0</accession>
<sequence>MSFRSIVRDVRDGFGSLSRRSFEVTLASLYGLTGHHKGKTQSSLDELDDSPAIIPESRWASLPPELLREVIRRLEADESTWPSRRNVVCFAAVCRTWREMCKETVLSPEFCGKLTFPVSIKQPGPRDGMIQCYIKRNRSKSTYHLYLCLSNVVTAEGGKFVLAAKRHRKTTCTEYTISMVSGNISRSSRTNIGKLRSNFLGTKFIIYDTQPPYNGAVVPHVGRTSKRFNSTKVSPKVPSVTYNIAQVSYELNVLGTRGPRRMRCMMHSIPASSVEPGGIVPGQPEQIVPRALEDSFRSTTSFSQSFRSTTSFSKSIMDPSMDFSSARFSDISGSIMGGDDNGEIKERPLVLRNKPPRWHEQLQCWCLNFRGRVTIASVKNFQLVAAPSPPPAGAPTPSQPGPADPEKVILQFGKVARDMFTMDYRYPLSAFQAFAICLSSFDTKLACE</sequence>
<dbReference type="EMBL" id="AP003270">
    <property type="protein sequence ID" value="BAC01219.1"/>
    <property type="molecule type" value="Genomic_DNA"/>
</dbReference>
<dbReference type="EMBL" id="AP008207">
    <property type="protein sequence ID" value="BAF06824.1"/>
    <property type="molecule type" value="Genomic_DNA"/>
</dbReference>
<dbReference type="EMBL" id="AP014957">
    <property type="protein sequence ID" value="BAS75392.1"/>
    <property type="molecule type" value="Genomic_DNA"/>
</dbReference>
<dbReference type="EMBL" id="CM000138">
    <property type="protein sequence ID" value="EAZ14277.1"/>
    <property type="molecule type" value="Genomic_DNA"/>
</dbReference>
<dbReference type="EMBL" id="AK102221">
    <property type="status" value="NOT_ANNOTATED_CDS"/>
    <property type="molecule type" value="mRNA"/>
</dbReference>
<dbReference type="RefSeq" id="XP_015641437.1">
    <property type="nucleotide sequence ID" value="XM_015785951.1"/>
</dbReference>
<dbReference type="FunCoup" id="Q8LJA9">
    <property type="interactions" value="2381"/>
</dbReference>
<dbReference type="STRING" id="39947.Q8LJA9"/>
<dbReference type="PaxDb" id="39947-Q8LJA9"/>
<dbReference type="EnsemblPlants" id="Os01t0866800-01">
    <property type="protein sequence ID" value="Os01t0866800-01"/>
    <property type="gene ID" value="Os01g0866800"/>
</dbReference>
<dbReference type="Gramene" id="Os01t0866800-01">
    <property type="protein sequence ID" value="Os01t0866800-01"/>
    <property type="gene ID" value="Os01g0866800"/>
</dbReference>
<dbReference type="KEGG" id="dosa:Os01g0866800"/>
<dbReference type="eggNOG" id="KOG2502">
    <property type="taxonomic scope" value="Eukaryota"/>
</dbReference>
<dbReference type="HOGENOM" id="CLU_028236_3_0_1"/>
<dbReference type="InParanoid" id="Q8LJA9"/>
<dbReference type="OMA" id="DINGSIM"/>
<dbReference type="OrthoDB" id="8775810at2759"/>
<dbReference type="Proteomes" id="UP000000763">
    <property type="component" value="Chromosome 1"/>
</dbReference>
<dbReference type="Proteomes" id="UP000007752">
    <property type="component" value="Chromosome 1"/>
</dbReference>
<dbReference type="Proteomes" id="UP000059680">
    <property type="component" value="Chromosome 1"/>
</dbReference>
<dbReference type="CDD" id="cd22153">
    <property type="entry name" value="F-box_AtTLP-like"/>
    <property type="match status" value="1"/>
</dbReference>
<dbReference type="Gene3D" id="1.20.1280.50">
    <property type="match status" value="1"/>
</dbReference>
<dbReference type="Gene3D" id="3.20.90.10">
    <property type="entry name" value="Tubby Protein, Chain A"/>
    <property type="match status" value="1"/>
</dbReference>
<dbReference type="InterPro" id="IPR036047">
    <property type="entry name" value="F-box-like_dom_sf"/>
</dbReference>
<dbReference type="InterPro" id="IPR001810">
    <property type="entry name" value="F-box_dom"/>
</dbReference>
<dbReference type="InterPro" id="IPR025659">
    <property type="entry name" value="Tubby-like_C"/>
</dbReference>
<dbReference type="InterPro" id="IPR000007">
    <property type="entry name" value="Tubby_C"/>
</dbReference>
<dbReference type="InterPro" id="IPR018066">
    <property type="entry name" value="Tubby_C_CS"/>
</dbReference>
<dbReference type="PANTHER" id="PTHR16517:SF39">
    <property type="entry name" value="TUBBY-LIKE F-BOX PROTEIN 3"/>
    <property type="match status" value="1"/>
</dbReference>
<dbReference type="PANTHER" id="PTHR16517">
    <property type="entry name" value="TUBBY-RELATED"/>
    <property type="match status" value="1"/>
</dbReference>
<dbReference type="Pfam" id="PF00646">
    <property type="entry name" value="F-box"/>
    <property type="match status" value="1"/>
</dbReference>
<dbReference type="Pfam" id="PF01167">
    <property type="entry name" value="Tub"/>
    <property type="match status" value="1"/>
</dbReference>
<dbReference type="PRINTS" id="PR01573">
    <property type="entry name" value="SUPERTUBBY"/>
</dbReference>
<dbReference type="SUPFAM" id="SSF81383">
    <property type="entry name" value="F-box domain"/>
    <property type="match status" value="1"/>
</dbReference>
<dbReference type="SUPFAM" id="SSF54518">
    <property type="entry name" value="Tubby C-terminal domain-like"/>
    <property type="match status" value="1"/>
</dbReference>
<dbReference type="PROSITE" id="PS01200">
    <property type="entry name" value="TUB_1"/>
    <property type="match status" value="1"/>
</dbReference>
<dbReference type="PROSITE" id="PS01201">
    <property type="entry name" value="TUB_2"/>
    <property type="match status" value="1"/>
</dbReference>
<comment type="tissue specificity">
    <text evidence="2">Expressed in roots, leaves, flowers and seeds.</text>
</comment>
<comment type="similarity">
    <text evidence="3">Belongs to the TUB family.</text>
</comment>
<gene>
    <name type="primary">TULP3</name>
    <name type="synonym">TULP5</name>
    <name type="ordered locus">Os01g0866800</name>
    <name type="ordered locus">LOC_Os01g64700</name>
    <name type="ORF">OsJ_004102</name>
    <name type="ORF">P0505D12.45</name>
</gene>
<evidence type="ECO:0000256" key="1">
    <source>
        <dbReference type="SAM" id="MobiDB-lite"/>
    </source>
</evidence>
<evidence type="ECO:0000269" key="2">
    <source>
    </source>
</evidence>
<evidence type="ECO:0000305" key="3"/>
<proteinExistence type="evidence at transcript level"/>
<protein>
    <recommendedName>
        <fullName>Tubby-like F-box protein 3</fullName>
        <shortName>OsTLP3</shortName>
    </recommendedName>
    <alternativeName>
        <fullName>Tubby-like F-box protein 5</fullName>
        <shortName>OsTLP5</shortName>
    </alternativeName>
</protein>
<reference key="1">
    <citation type="journal article" date="2002" name="Nature">
        <title>The genome sequence and structure of rice chromosome 1.</title>
        <authorList>
            <person name="Sasaki T."/>
            <person name="Matsumoto T."/>
            <person name="Yamamoto K."/>
            <person name="Sakata K."/>
            <person name="Baba T."/>
            <person name="Katayose Y."/>
            <person name="Wu J."/>
            <person name="Niimura Y."/>
            <person name="Cheng Z."/>
            <person name="Nagamura Y."/>
            <person name="Antonio B.A."/>
            <person name="Kanamori H."/>
            <person name="Hosokawa S."/>
            <person name="Masukawa M."/>
            <person name="Arikawa K."/>
            <person name="Chiden Y."/>
            <person name="Hayashi M."/>
            <person name="Okamoto M."/>
            <person name="Ando T."/>
            <person name="Aoki H."/>
            <person name="Arita K."/>
            <person name="Hamada M."/>
            <person name="Harada C."/>
            <person name="Hijishita S."/>
            <person name="Honda M."/>
            <person name="Ichikawa Y."/>
            <person name="Idonuma A."/>
            <person name="Iijima M."/>
            <person name="Ikeda M."/>
            <person name="Ikeno M."/>
            <person name="Ito S."/>
            <person name="Ito T."/>
            <person name="Ito Y."/>
            <person name="Ito Y."/>
            <person name="Iwabuchi A."/>
            <person name="Kamiya K."/>
            <person name="Karasawa W."/>
            <person name="Katagiri S."/>
            <person name="Kikuta A."/>
            <person name="Kobayashi N."/>
            <person name="Kono I."/>
            <person name="Machita K."/>
            <person name="Maehara T."/>
            <person name="Mizuno H."/>
            <person name="Mizubayashi T."/>
            <person name="Mukai Y."/>
            <person name="Nagasaki H."/>
            <person name="Nakashima M."/>
            <person name="Nakama Y."/>
            <person name="Nakamichi Y."/>
            <person name="Nakamura M."/>
            <person name="Namiki N."/>
            <person name="Negishi M."/>
            <person name="Ohta I."/>
            <person name="Ono N."/>
            <person name="Saji S."/>
            <person name="Sakai K."/>
            <person name="Shibata M."/>
            <person name="Shimokawa T."/>
            <person name="Shomura A."/>
            <person name="Song J."/>
            <person name="Takazaki Y."/>
            <person name="Terasawa K."/>
            <person name="Tsuji K."/>
            <person name="Waki K."/>
            <person name="Yamagata H."/>
            <person name="Yamane H."/>
            <person name="Yoshiki S."/>
            <person name="Yoshihara R."/>
            <person name="Yukawa K."/>
            <person name="Zhong H."/>
            <person name="Iwama H."/>
            <person name="Endo T."/>
            <person name="Ito H."/>
            <person name="Hahn J.H."/>
            <person name="Kim H.-I."/>
            <person name="Eun M.-Y."/>
            <person name="Yano M."/>
            <person name="Jiang J."/>
            <person name="Gojobori T."/>
        </authorList>
    </citation>
    <scope>NUCLEOTIDE SEQUENCE [LARGE SCALE GENOMIC DNA]</scope>
    <source>
        <strain>cv. Nipponbare</strain>
    </source>
</reference>
<reference key="2">
    <citation type="journal article" date="2005" name="Nature">
        <title>The map-based sequence of the rice genome.</title>
        <authorList>
            <consortium name="International rice genome sequencing project (IRGSP)"/>
        </authorList>
    </citation>
    <scope>NUCLEOTIDE SEQUENCE [LARGE SCALE GENOMIC DNA]</scope>
    <source>
        <strain>cv. Nipponbare</strain>
    </source>
</reference>
<reference key="3">
    <citation type="journal article" date="2008" name="Nucleic Acids Res.">
        <title>The rice annotation project database (RAP-DB): 2008 update.</title>
        <authorList>
            <consortium name="The rice annotation project (RAP)"/>
        </authorList>
    </citation>
    <scope>GENOME REANNOTATION</scope>
    <source>
        <strain>cv. Nipponbare</strain>
    </source>
</reference>
<reference key="4">
    <citation type="journal article" date="2013" name="Rice">
        <title>Improvement of the Oryza sativa Nipponbare reference genome using next generation sequence and optical map data.</title>
        <authorList>
            <person name="Kawahara Y."/>
            <person name="de la Bastide M."/>
            <person name="Hamilton J.P."/>
            <person name="Kanamori H."/>
            <person name="McCombie W.R."/>
            <person name="Ouyang S."/>
            <person name="Schwartz D.C."/>
            <person name="Tanaka T."/>
            <person name="Wu J."/>
            <person name="Zhou S."/>
            <person name="Childs K.L."/>
            <person name="Davidson R.M."/>
            <person name="Lin H."/>
            <person name="Quesada-Ocampo L."/>
            <person name="Vaillancourt B."/>
            <person name="Sakai H."/>
            <person name="Lee S.S."/>
            <person name="Kim J."/>
            <person name="Numa H."/>
            <person name="Itoh T."/>
            <person name="Buell C.R."/>
            <person name="Matsumoto T."/>
        </authorList>
    </citation>
    <scope>GENOME REANNOTATION</scope>
    <source>
        <strain>cv. Nipponbare</strain>
    </source>
</reference>
<reference key="5">
    <citation type="journal article" date="2005" name="PLoS Biol.">
        <title>The genomes of Oryza sativa: a history of duplications.</title>
        <authorList>
            <person name="Yu J."/>
            <person name="Wang J."/>
            <person name="Lin W."/>
            <person name="Li S."/>
            <person name="Li H."/>
            <person name="Zhou J."/>
            <person name="Ni P."/>
            <person name="Dong W."/>
            <person name="Hu S."/>
            <person name="Zeng C."/>
            <person name="Zhang J."/>
            <person name="Zhang Y."/>
            <person name="Li R."/>
            <person name="Xu Z."/>
            <person name="Li S."/>
            <person name="Li X."/>
            <person name="Zheng H."/>
            <person name="Cong L."/>
            <person name="Lin L."/>
            <person name="Yin J."/>
            <person name="Geng J."/>
            <person name="Li G."/>
            <person name="Shi J."/>
            <person name="Liu J."/>
            <person name="Lv H."/>
            <person name="Li J."/>
            <person name="Wang J."/>
            <person name="Deng Y."/>
            <person name="Ran L."/>
            <person name="Shi X."/>
            <person name="Wang X."/>
            <person name="Wu Q."/>
            <person name="Li C."/>
            <person name="Ren X."/>
            <person name="Wang J."/>
            <person name="Wang X."/>
            <person name="Li D."/>
            <person name="Liu D."/>
            <person name="Zhang X."/>
            <person name="Ji Z."/>
            <person name="Zhao W."/>
            <person name="Sun Y."/>
            <person name="Zhang Z."/>
            <person name="Bao J."/>
            <person name="Han Y."/>
            <person name="Dong L."/>
            <person name="Ji J."/>
            <person name="Chen P."/>
            <person name="Wu S."/>
            <person name="Liu J."/>
            <person name="Xiao Y."/>
            <person name="Bu D."/>
            <person name="Tan J."/>
            <person name="Yang L."/>
            <person name="Ye C."/>
            <person name="Zhang J."/>
            <person name="Xu J."/>
            <person name="Zhou Y."/>
            <person name="Yu Y."/>
            <person name="Zhang B."/>
            <person name="Zhuang S."/>
            <person name="Wei H."/>
            <person name="Liu B."/>
            <person name="Lei M."/>
            <person name="Yu H."/>
            <person name="Li Y."/>
            <person name="Xu H."/>
            <person name="Wei S."/>
            <person name="He X."/>
            <person name="Fang L."/>
            <person name="Zhang Z."/>
            <person name="Zhang Y."/>
            <person name="Huang X."/>
            <person name="Su Z."/>
            <person name="Tong W."/>
            <person name="Li J."/>
            <person name="Tong Z."/>
            <person name="Li S."/>
            <person name="Ye J."/>
            <person name="Wang L."/>
            <person name="Fang L."/>
            <person name="Lei T."/>
            <person name="Chen C.-S."/>
            <person name="Chen H.-C."/>
            <person name="Xu Z."/>
            <person name="Li H."/>
            <person name="Huang H."/>
            <person name="Zhang F."/>
            <person name="Xu H."/>
            <person name="Li N."/>
            <person name="Zhao C."/>
            <person name="Li S."/>
            <person name="Dong L."/>
            <person name="Huang Y."/>
            <person name="Li L."/>
            <person name="Xi Y."/>
            <person name="Qi Q."/>
            <person name="Li W."/>
            <person name="Zhang B."/>
            <person name="Hu W."/>
            <person name="Zhang Y."/>
            <person name="Tian X."/>
            <person name="Jiao Y."/>
            <person name="Liang X."/>
            <person name="Jin J."/>
            <person name="Gao L."/>
            <person name="Zheng W."/>
            <person name="Hao B."/>
            <person name="Liu S.-M."/>
            <person name="Wang W."/>
            <person name="Yuan L."/>
            <person name="Cao M."/>
            <person name="McDermott J."/>
            <person name="Samudrala R."/>
            <person name="Wang J."/>
            <person name="Wong G.K.-S."/>
            <person name="Yang H."/>
        </authorList>
    </citation>
    <scope>NUCLEOTIDE SEQUENCE [LARGE SCALE GENOMIC DNA]</scope>
    <source>
        <strain>cv. Nipponbare</strain>
    </source>
</reference>
<reference key="6">
    <citation type="journal article" date="2003" name="Science">
        <title>Collection, mapping, and annotation of over 28,000 cDNA clones from japonica rice.</title>
        <authorList>
            <consortium name="The rice full-length cDNA consortium"/>
        </authorList>
    </citation>
    <scope>NUCLEOTIDE SEQUENCE [LARGE SCALE MRNA]</scope>
    <source>
        <strain>cv. Nipponbare</strain>
    </source>
</reference>
<reference key="7">
    <citation type="journal article" date="2008" name="FEBS J.">
        <title>Identification of rice TUBBY-like genes and their evolution.</title>
        <authorList>
            <person name="Liu Q."/>
        </authorList>
    </citation>
    <scope>GENE FAMILY</scope>
    <scope>NOMENCLATURE</scope>
</reference>
<reference key="8">
    <citation type="journal article" date="2008" name="Genomics">
        <title>Genomewide comparative phylogenetic and molecular evolutionary analysis of tubby-like protein family in Arabidopsis, rice, and poplar.</title>
        <authorList>
            <person name="Yang Z."/>
            <person name="Zhou Y."/>
            <person name="Wang X."/>
            <person name="Gu S."/>
            <person name="Yu J."/>
            <person name="Liang G."/>
            <person name="Yan C."/>
            <person name="Xu C."/>
        </authorList>
    </citation>
    <scope>TISSUE SPECIFICITY</scope>
    <scope>GENE FAMILY</scope>
    <scope>NOMENCLATURE</scope>
</reference>